<dbReference type="EMBL" id="BA000039">
    <property type="protein sequence ID" value="BAC09240.1"/>
    <property type="molecule type" value="Genomic_DNA"/>
</dbReference>
<dbReference type="RefSeq" id="NP_682478.1">
    <property type="nucleotide sequence ID" value="NC_004113.1"/>
</dbReference>
<dbReference type="RefSeq" id="WP_011057525.1">
    <property type="nucleotide sequence ID" value="NC_004113.1"/>
</dbReference>
<dbReference type="SMR" id="Q8DIA2"/>
<dbReference type="STRING" id="197221.gene:10748290"/>
<dbReference type="EnsemblBacteria" id="BAC09240">
    <property type="protein sequence ID" value="BAC09240"/>
    <property type="gene ID" value="BAC09240"/>
</dbReference>
<dbReference type="KEGG" id="tel:tll1688"/>
<dbReference type="PATRIC" id="fig|197221.4.peg.1769"/>
<dbReference type="eggNOG" id="COG0052">
    <property type="taxonomic scope" value="Bacteria"/>
</dbReference>
<dbReference type="Proteomes" id="UP000000440">
    <property type="component" value="Chromosome"/>
</dbReference>
<dbReference type="GO" id="GO:0022627">
    <property type="term" value="C:cytosolic small ribosomal subunit"/>
    <property type="evidence" value="ECO:0007669"/>
    <property type="project" value="TreeGrafter"/>
</dbReference>
<dbReference type="GO" id="GO:0003735">
    <property type="term" value="F:structural constituent of ribosome"/>
    <property type="evidence" value="ECO:0007669"/>
    <property type="project" value="InterPro"/>
</dbReference>
<dbReference type="GO" id="GO:0006412">
    <property type="term" value="P:translation"/>
    <property type="evidence" value="ECO:0007669"/>
    <property type="project" value="UniProtKB-UniRule"/>
</dbReference>
<dbReference type="CDD" id="cd01425">
    <property type="entry name" value="RPS2"/>
    <property type="match status" value="1"/>
</dbReference>
<dbReference type="FunFam" id="1.10.287.610:FF:000001">
    <property type="entry name" value="30S ribosomal protein S2"/>
    <property type="match status" value="1"/>
</dbReference>
<dbReference type="Gene3D" id="3.40.50.10490">
    <property type="entry name" value="Glucose-6-phosphate isomerase like protein, domain 1"/>
    <property type="match status" value="1"/>
</dbReference>
<dbReference type="Gene3D" id="1.10.287.610">
    <property type="entry name" value="Helix hairpin bin"/>
    <property type="match status" value="1"/>
</dbReference>
<dbReference type="HAMAP" id="MF_00291_B">
    <property type="entry name" value="Ribosomal_uS2_B"/>
    <property type="match status" value="1"/>
</dbReference>
<dbReference type="InterPro" id="IPR001865">
    <property type="entry name" value="Ribosomal_uS2"/>
</dbReference>
<dbReference type="InterPro" id="IPR005706">
    <property type="entry name" value="Ribosomal_uS2_bac/mit/plastid"/>
</dbReference>
<dbReference type="InterPro" id="IPR018130">
    <property type="entry name" value="Ribosomal_uS2_CS"/>
</dbReference>
<dbReference type="InterPro" id="IPR023591">
    <property type="entry name" value="Ribosomal_uS2_flav_dom_sf"/>
</dbReference>
<dbReference type="NCBIfam" id="TIGR01011">
    <property type="entry name" value="rpsB_bact"/>
    <property type="match status" value="1"/>
</dbReference>
<dbReference type="PANTHER" id="PTHR12534">
    <property type="entry name" value="30S RIBOSOMAL PROTEIN S2 PROKARYOTIC AND ORGANELLAR"/>
    <property type="match status" value="1"/>
</dbReference>
<dbReference type="PANTHER" id="PTHR12534:SF0">
    <property type="entry name" value="SMALL RIBOSOMAL SUBUNIT PROTEIN US2M"/>
    <property type="match status" value="1"/>
</dbReference>
<dbReference type="Pfam" id="PF00318">
    <property type="entry name" value="Ribosomal_S2"/>
    <property type="match status" value="1"/>
</dbReference>
<dbReference type="PRINTS" id="PR00395">
    <property type="entry name" value="RIBOSOMALS2"/>
</dbReference>
<dbReference type="SUPFAM" id="SSF52313">
    <property type="entry name" value="Ribosomal protein S2"/>
    <property type="match status" value="1"/>
</dbReference>
<dbReference type="PROSITE" id="PS00962">
    <property type="entry name" value="RIBOSOMAL_S2_1"/>
    <property type="match status" value="1"/>
</dbReference>
<accession>Q8DIA2</accession>
<keyword id="KW-1185">Reference proteome</keyword>
<keyword id="KW-0687">Ribonucleoprotein</keyword>
<keyword id="KW-0689">Ribosomal protein</keyword>
<organism>
    <name type="scientific">Thermosynechococcus vestitus (strain NIES-2133 / IAM M-273 / BP-1)</name>
    <dbReference type="NCBI Taxonomy" id="197221"/>
    <lineage>
        <taxon>Bacteria</taxon>
        <taxon>Bacillati</taxon>
        <taxon>Cyanobacteriota</taxon>
        <taxon>Cyanophyceae</taxon>
        <taxon>Acaryochloridales</taxon>
        <taxon>Thermosynechococcaceae</taxon>
        <taxon>Thermosynechococcus</taxon>
    </lineage>
</organism>
<reference key="1">
    <citation type="journal article" date="2002" name="DNA Res.">
        <title>Complete genome structure of the thermophilic cyanobacterium Thermosynechococcus elongatus BP-1.</title>
        <authorList>
            <person name="Nakamura Y."/>
            <person name="Kaneko T."/>
            <person name="Sato S."/>
            <person name="Ikeuchi M."/>
            <person name="Katoh H."/>
            <person name="Sasamoto S."/>
            <person name="Watanabe A."/>
            <person name="Iriguchi M."/>
            <person name="Kawashima K."/>
            <person name="Kimura T."/>
            <person name="Kishida Y."/>
            <person name="Kiyokawa C."/>
            <person name="Kohara M."/>
            <person name="Matsumoto M."/>
            <person name="Matsuno A."/>
            <person name="Nakazaki N."/>
            <person name="Shimpo S."/>
            <person name="Sugimoto M."/>
            <person name="Takeuchi C."/>
            <person name="Yamada M."/>
            <person name="Tabata S."/>
        </authorList>
    </citation>
    <scope>NUCLEOTIDE SEQUENCE [LARGE SCALE GENOMIC DNA]</scope>
    <source>
        <strain>NIES-2133 / IAM M-273 / BP-1</strain>
    </source>
</reference>
<proteinExistence type="inferred from homology"/>
<feature type="chain" id="PRO_0000134258" description="Small ribosomal subunit protein uS2">
    <location>
        <begin position="1"/>
        <end position="263"/>
    </location>
</feature>
<feature type="region of interest" description="Disordered" evidence="2">
    <location>
        <begin position="228"/>
        <end position="263"/>
    </location>
</feature>
<feature type="compositionally biased region" description="Acidic residues" evidence="2">
    <location>
        <begin position="230"/>
        <end position="263"/>
    </location>
</feature>
<protein>
    <recommendedName>
        <fullName evidence="1">Small ribosomal subunit protein uS2</fullName>
    </recommendedName>
    <alternativeName>
        <fullName evidence="3">30S ribosomal protein S2</fullName>
    </alternativeName>
</protein>
<name>RS2_THEVB</name>
<comment type="similarity">
    <text evidence="1">Belongs to the universal ribosomal protein uS2 family.</text>
</comment>
<sequence length="263" mass="29442">MAVLSLAQMLEAGVHFGHQARRWNPRMAPYIFTVRNGVHIIDLVQTAQLVEEAYNYIRNAAEKGKRFLFIGTKRQAAGIVEQEALRCGSYYVNQRWLGGMLTNWTTIKTRVDRLKELESMEESGLIDLRPKQEASALRRELARLQKYLGGIKQMRRLPDIAIIVDVKREYNAVAECHKLGIPIVALLDTNCDPTQVDIPIPANDDAIRSIKLIVGKLADAIYEGRHGQLEEPEADLADEDDNGMTTSDDGDAEALDIPDDSDA</sequence>
<gene>
    <name evidence="1" type="primary">rpsB</name>
    <name evidence="1" type="synonym">rps2</name>
    <name type="ordered locus">tll1688</name>
</gene>
<evidence type="ECO:0000255" key="1">
    <source>
        <dbReference type="HAMAP-Rule" id="MF_00291"/>
    </source>
</evidence>
<evidence type="ECO:0000256" key="2">
    <source>
        <dbReference type="SAM" id="MobiDB-lite"/>
    </source>
</evidence>
<evidence type="ECO:0000305" key="3"/>